<accession>A7MB62</accession>
<sequence length="394" mass="44761">MDSQGRKVVVCDNGTGFVKCGYAGSNFPEHIFPALVGRPIIRSTTKVGNIEIKDLMVGDEASELRSMLEVNYPMENGIVRNWDDMKHLWDYTFGPEKLNIDTRNCKILLTEPPMNPTKNREKIVEVMFETYQFSGVYVAIQAVLTLYAQGLLTGVVVDSGDGVTHICPVYEGFSLPHLTRRLDIAGRDITRYLIKLLLLRGYAFNHSADFETVRMIKEKLCYVGYNIEQEQKLALETTVLVESYTLPDGRIIKVGGERFEAPEALFQPHLINVEGVGVAELLFNTIQAADIDTRSEFYKHIVLSGGSTMYPGLPSRLERELKQLYLERVLKGDVEKLSKFKIRIEDPPRRKHMVFLGGAVLADIMKDKDNFWMTRQEYQEKGVRVLEKLGVTVR</sequence>
<evidence type="ECO:0000250" key="1">
    <source>
        <dbReference type="UniProtKB" id="P61160"/>
    </source>
</evidence>
<evidence type="ECO:0000269" key="2">
    <source>
    </source>
</evidence>
<evidence type="ECO:0000269" key="3">
    <source>
    </source>
</evidence>
<evidence type="ECO:0000269" key="4">
    <source>
    </source>
</evidence>
<evidence type="ECO:0000305" key="5"/>
<evidence type="ECO:0007829" key="6">
    <source>
        <dbReference type="PDB" id="1K8K"/>
    </source>
</evidence>
<evidence type="ECO:0007829" key="7">
    <source>
        <dbReference type="PDB" id="2P9I"/>
    </source>
</evidence>
<evidence type="ECO:0007829" key="8">
    <source>
        <dbReference type="PDB" id="2P9K"/>
    </source>
</evidence>
<evidence type="ECO:0007829" key="9">
    <source>
        <dbReference type="PDB" id="2P9P"/>
    </source>
</evidence>
<evidence type="ECO:0007829" key="10">
    <source>
        <dbReference type="PDB" id="3UKR"/>
    </source>
</evidence>
<evidence type="ECO:0007829" key="11">
    <source>
        <dbReference type="PDB" id="3UKU"/>
    </source>
</evidence>
<evidence type="ECO:0007829" key="12">
    <source>
        <dbReference type="PDB" id="4JD2"/>
    </source>
</evidence>
<evidence type="ECO:0007829" key="13">
    <source>
        <dbReference type="PDB" id="7T5Q"/>
    </source>
</evidence>
<evidence type="ECO:0007829" key="14">
    <source>
        <dbReference type="PDB" id="8TAH"/>
    </source>
</evidence>
<gene>
    <name type="primary">ACTR2</name>
    <name type="synonym">ARP2</name>
</gene>
<dbReference type="EMBL" id="BC151356">
    <property type="protein sequence ID" value="AAI51357.1"/>
    <property type="molecule type" value="mRNA"/>
</dbReference>
<dbReference type="RefSeq" id="NP_001095683.1">
    <property type="nucleotide sequence ID" value="NM_001102213.1"/>
</dbReference>
<dbReference type="PDB" id="1K8K">
    <property type="method" value="X-ray"/>
    <property type="resolution" value="2.00 A"/>
    <property type="chains" value="B=1-394"/>
</dbReference>
<dbReference type="PDB" id="1TYQ">
    <property type="method" value="X-ray"/>
    <property type="resolution" value="2.55 A"/>
    <property type="chains" value="B=1-394"/>
</dbReference>
<dbReference type="PDB" id="1U2V">
    <property type="method" value="X-ray"/>
    <property type="resolution" value="2.55 A"/>
    <property type="chains" value="B=1-394"/>
</dbReference>
<dbReference type="PDB" id="2P9I">
    <property type="method" value="X-ray"/>
    <property type="resolution" value="2.46 A"/>
    <property type="chains" value="B=1-394"/>
</dbReference>
<dbReference type="PDB" id="2P9K">
    <property type="method" value="X-ray"/>
    <property type="resolution" value="2.59 A"/>
    <property type="chains" value="B=1-394"/>
</dbReference>
<dbReference type="PDB" id="2P9L">
    <property type="method" value="X-ray"/>
    <property type="resolution" value="2.65 A"/>
    <property type="chains" value="B=1-394"/>
</dbReference>
<dbReference type="PDB" id="2P9N">
    <property type="method" value="X-ray"/>
    <property type="resolution" value="2.85 A"/>
    <property type="chains" value="B=1-394"/>
</dbReference>
<dbReference type="PDB" id="2P9P">
    <property type="method" value="X-ray"/>
    <property type="resolution" value="2.90 A"/>
    <property type="chains" value="B=1-394"/>
</dbReference>
<dbReference type="PDB" id="2P9S">
    <property type="method" value="X-ray"/>
    <property type="resolution" value="2.68 A"/>
    <property type="chains" value="B=1-394"/>
</dbReference>
<dbReference type="PDB" id="2P9U">
    <property type="method" value="X-ray"/>
    <property type="resolution" value="2.75 A"/>
    <property type="chains" value="B=1-394"/>
</dbReference>
<dbReference type="PDB" id="3DXK">
    <property type="method" value="X-ray"/>
    <property type="resolution" value="2.70 A"/>
    <property type="chains" value="B=1-394"/>
</dbReference>
<dbReference type="PDB" id="3DXM">
    <property type="method" value="X-ray"/>
    <property type="resolution" value="2.85 A"/>
    <property type="chains" value="B=1-394"/>
</dbReference>
<dbReference type="PDB" id="3RSE">
    <property type="method" value="X-ray"/>
    <property type="resolution" value="2.65 A"/>
    <property type="chains" value="B=1-394"/>
</dbReference>
<dbReference type="PDB" id="3UKR">
    <property type="method" value="X-ray"/>
    <property type="resolution" value="2.48 A"/>
    <property type="chains" value="B=1-394"/>
</dbReference>
<dbReference type="PDB" id="3UKU">
    <property type="method" value="X-ray"/>
    <property type="resolution" value="2.75 A"/>
    <property type="chains" value="B=1-394"/>
</dbReference>
<dbReference type="PDB" id="3ULE">
    <property type="method" value="X-ray"/>
    <property type="resolution" value="2.50 A"/>
    <property type="chains" value="B=1-394"/>
</dbReference>
<dbReference type="PDB" id="4JD2">
    <property type="method" value="X-ray"/>
    <property type="resolution" value="3.08 A"/>
    <property type="chains" value="B=1-394"/>
</dbReference>
<dbReference type="PDB" id="4XEI">
    <property type="method" value="X-ray"/>
    <property type="resolution" value="3.87 A"/>
    <property type="chains" value="B=1-394"/>
</dbReference>
<dbReference type="PDB" id="4XF2">
    <property type="method" value="X-ray"/>
    <property type="resolution" value="5.00 A"/>
    <property type="chains" value="B/U=1-394"/>
</dbReference>
<dbReference type="PDB" id="6DEC">
    <property type="method" value="X-ray"/>
    <property type="resolution" value="4.60 A"/>
    <property type="chains" value="B/I=1-394"/>
</dbReference>
<dbReference type="PDB" id="7JPN">
    <property type="method" value="EM"/>
    <property type="resolution" value="3.24 A"/>
    <property type="chains" value="B=4-380"/>
</dbReference>
<dbReference type="PDB" id="7T5Q">
    <property type="method" value="EM"/>
    <property type="resolution" value="3.40 A"/>
    <property type="chains" value="B=1-394"/>
</dbReference>
<dbReference type="PDB" id="7TPT">
    <property type="method" value="EM"/>
    <property type="resolution" value="3.90 A"/>
    <property type="chains" value="B=1-394"/>
</dbReference>
<dbReference type="PDB" id="8TAH">
    <property type="method" value="EM"/>
    <property type="resolution" value="2.89 A"/>
    <property type="chains" value="B=1-394"/>
</dbReference>
<dbReference type="PDB" id="9DLX">
    <property type="method" value="EM"/>
    <property type="resolution" value="2.91 A"/>
    <property type="chains" value="B=1-390"/>
</dbReference>
<dbReference type="PDB" id="9DLZ">
    <property type="method" value="EM"/>
    <property type="resolution" value="3.40 A"/>
    <property type="chains" value="B=1-390"/>
</dbReference>
<dbReference type="PDBsum" id="1K8K"/>
<dbReference type="PDBsum" id="1TYQ"/>
<dbReference type="PDBsum" id="1U2V"/>
<dbReference type="PDBsum" id="2P9I"/>
<dbReference type="PDBsum" id="2P9K"/>
<dbReference type="PDBsum" id="2P9L"/>
<dbReference type="PDBsum" id="2P9N"/>
<dbReference type="PDBsum" id="2P9P"/>
<dbReference type="PDBsum" id="2P9S"/>
<dbReference type="PDBsum" id="2P9U"/>
<dbReference type="PDBsum" id="3DXK"/>
<dbReference type="PDBsum" id="3DXM"/>
<dbReference type="PDBsum" id="3RSE"/>
<dbReference type="PDBsum" id="3UKR"/>
<dbReference type="PDBsum" id="3UKU"/>
<dbReference type="PDBsum" id="3ULE"/>
<dbReference type="PDBsum" id="4JD2"/>
<dbReference type="PDBsum" id="4XEI"/>
<dbReference type="PDBsum" id="4XF2"/>
<dbReference type="PDBsum" id="6DEC"/>
<dbReference type="PDBsum" id="7JPN"/>
<dbReference type="PDBsum" id="7T5Q"/>
<dbReference type="PDBsum" id="7TPT"/>
<dbReference type="PDBsum" id="8TAH"/>
<dbReference type="PDBsum" id="9DLX"/>
<dbReference type="PDBsum" id="9DLZ"/>
<dbReference type="EMDB" id="EMD-22416"/>
<dbReference type="EMDB" id="EMD-25707"/>
<dbReference type="EMDB" id="EMD-26063"/>
<dbReference type="EMDB" id="EMD-41135"/>
<dbReference type="EMDB" id="EMD-46992"/>
<dbReference type="EMDB" id="EMD-46993"/>
<dbReference type="SMR" id="A7MB62"/>
<dbReference type="BioGRID" id="195053">
    <property type="interactions" value="3"/>
</dbReference>
<dbReference type="DIP" id="DIP-29789N"/>
<dbReference type="FunCoup" id="A7MB62">
    <property type="interactions" value="3952"/>
</dbReference>
<dbReference type="IntAct" id="A7MB62">
    <property type="interactions" value="4"/>
</dbReference>
<dbReference type="STRING" id="9913.ENSBTAP00000062306"/>
<dbReference type="PaxDb" id="9913-ENSBTAP00000012872"/>
<dbReference type="PeptideAtlas" id="A7MB62"/>
<dbReference type="Ensembl" id="ENSBTAT00000012872.6">
    <property type="protein sequence ID" value="ENSBTAP00000012872.6"/>
    <property type="gene ID" value="ENSBTAG00000009761.7"/>
</dbReference>
<dbReference type="GeneID" id="538486"/>
<dbReference type="KEGG" id="bta:538486"/>
<dbReference type="CTD" id="10097"/>
<dbReference type="VEuPathDB" id="HostDB:ENSBTAG00000009761"/>
<dbReference type="VGNC" id="VGNC:25586">
    <property type="gene designation" value="ACTR2"/>
</dbReference>
<dbReference type="eggNOG" id="KOG0677">
    <property type="taxonomic scope" value="Eukaryota"/>
</dbReference>
<dbReference type="GeneTree" id="ENSGT00940000154556"/>
<dbReference type="InParanoid" id="A7MB62"/>
<dbReference type="OMA" id="WEDMQHL"/>
<dbReference type="OrthoDB" id="10251209at2759"/>
<dbReference type="Reactome" id="R-BTA-2029482">
    <property type="pathway name" value="Regulation of actin dynamics for phagocytic cup formation"/>
</dbReference>
<dbReference type="Reactome" id="R-BTA-3928662">
    <property type="pathway name" value="EPHB-mediated forward signaling"/>
</dbReference>
<dbReference type="Reactome" id="R-BTA-5663213">
    <property type="pathway name" value="RHO GTPases Activate WASPs and WAVEs"/>
</dbReference>
<dbReference type="Reactome" id="R-BTA-6798695">
    <property type="pathway name" value="Neutrophil degranulation"/>
</dbReference>
<dbReference type="Reactome" id="R-BTA-8856828">
    <property type="pathway name" value="Clathrin-mediated endocytosis"/>
</dbReference>
<dbReference type="EvolutionaryTrace" id="A7MB62"/>
<dbReference type="PRO" id="PR:A7MB62"/>
<dbReference type="Proteomes" id="UP000009136">
    <property type="component" value="Chromosome 11"/>
</dbReference>
<dbReference type="Bgee" id="ENSBTAG00000009761">
    <property type="expression patterns" value="Expressed in monocyte and 106 other cell types or tissues"/>
</dbReference>
<dbReference type="GO" id="GO:0005885">
    <property type="term" value="C:Arp2/3 protein complex"/>
    <property type="evidence" value="ECO:0000250"/>
    <property type="project" value="UniProtKB"/>
</dbReference>
<dbReference type="GO" id="GO:0005938">
    <property type="term" value="C:cell cortex"/>
    <property type="evidence" value="ECO:0000318"/>
    <property type="project" value="GO_Central"/>
</dbReference>
<dbReference type="GO" id="GO:0042995">
    <property type="term" value="C:cell projection"/>
    <property type="evidence" value="ECO:0007669"/>
    <property type="project" value="UniProtKB-SubCell"/>
</dbReference>
<dbReference type="GO" id="GO:0005737">
    <property type="term" value="C:cytoplasm"/>
    <property type="evidence" value="ECO:0000250"/>
    <property type="project" value="UniProtKB"/>
</dbReference>
<dbReference type="GO" id="GO:0005829">
    <property type="term" value="C:cytosol"/>
    <property type="evidence" value="ECO:0000304"/>
    <property type="project" value="Reactome"/>
</dbReference>
<dbReference type="GO" id="GO:0005634">
    <property type="term" value="C:nucleus"/>
    <property type="evidence" value="ECO:0000250"/>
    <property type="project" value="UniProtKB"/>
</dbReference>
<dbReference type="GO" id="GO:0035861">
    <property type="term" value="C:site of double-strand break"/>
    <property type="evidence" value="ECO:0000250"/>
    <property type="project" value="UniProtKB"/>
</dbReference>
<dbReference type="GO" id="GO:0003779">
    <property type="term" value="F:actin binding"/>
    <property type="evidence" value="ECO:0007669"/>
    <property type="project" value="UniProtKB-KW"/>
</dbReference>
<dbReference type="GO" id="GO:0005524">
    <property type="term" value="F:ATP binding"/>
    <property type="evidence" value="ECO:0007669"/>
    <property type="project" value="UniProtKB-KW"/>
</dbReference>
<dbReference type="GO" id="GO:0034314">
    <property type="term" value="P:Arp2/3 complex-mediated actin nucleation"/>
    <property type="evidence" value="ECO:0000250"/>
    <property type="project" value="UniProtKB"/>
</dbReference>
<dbReference type="GO" id="GO:1905168">
    <property type="term" value="P:positive regulation of double-strand break repair via homologous recombination"/>
    <property type="evidence" value="ECO:0000250"/>
    <property type="project" value="UniProtKB"/>
</dbReference>
<dbReference type="GO" id="GO:0010592">
    <property type="term" value="P:positive regulation of lamellipodium assembly"/>
    <property type="evidence" value="ECO:0000250"/>
    <property type="project" value="UniProtKB"/>
</dbReference>
<dbReference type="GO" id="GO:0045944">
    <property type="term" value="P:positive regulation of transcription by RNA polymerase II"/>
    <property type="evidence" value="ECO:0000250"/>
    <property type="project" value="UniProtKB"/>
</dbReference>
<dbReference type="CDD" id="cd10220">
    <property type="entry name" value="ASKHA_NBD_Arp2"/>
    <property type="match status" value="1"/>
</dbReference>
<dbReference type="FunFam" id="3.30.420.40:FF:000538">
    <property type="entry name" value="Actin-related protein 2"/>
    <property type="match status" value="1"/>
</dbReference>
<dbReference type="FunFam" id="3.90.640.10:FF:000005">
    <property type="entry name" value="Actin-related protein 2"/>
    <property type="match status" value="1"/>
</dbReference>
<dbReference type="Gene3D" id="3.30.420.40">
    <property type="match status" value="2"/>
</dbReference>
<dbReference type="Gene3D" id="3.90.640.10">
    <property type="entry name" value="Actin, Chain A, domain 4"/>
    <property type="match status" value="1"/>
</dbReference>
<dbReference type="InterPro" id="IPR004000">
    <property type="entry name" value="Actin"/>
</dbReference>
<dbReference type="InterPro" id="IPR020902">
    <property type="entry name" value="Actin/actin-like_CS"/>
</dbReference>
<dbReference type="InterPro" id="IPR043129">
    <property type="entry name" value="ATPase_NBD"/>
</dbReference>
<dbReference type="PANTHER" id="PTHR11937">
    <property type="entry name" value="ACTIN"/>
    <property type="match status" value="1"/>
</dbReference>
<dbReference type="Pfam" id="PF00022">
    <property type="entry name" value="Actin"/>
    <property type="match status" value="1"/>
</dbReference>
<dbReference type="PRINTS" id="PR00190">
    <property type="entry name" value="ACTIN"/>
</dbReference>
<dbReference type="SMART" id="SM00268">
    <property type="entry name" value="ACTIN"/>
    <property type="match status" value="1"/>
</dbReference>
<dbReference type="SUPFAM" id="SSF53067">
    <property type="entry name" value="Actin-like ATPase domain"/>
    <property type="match status" value="2"/>
</dbReference>
<dbReference type="PROSITE" id="PS01132">
    <property type="entry name" value="ACTINS_ACT_LIKE"/>
    <property type="match status" value="1"/>
</dbReference>
<protein>
    <recommendedName>
        <fullName>Actin-related protein 2</fullName>
    </recommendedName>
    <alternativeName>
        <fullName>Actin-like protein 2</fullName>
    </alternativeName>
</protein>
<feature type="chain" id="PRO_0000327246" description="Actin-related protein 2">
    <location>
        <begin position="1"/>
        <end position="394"/>
    </location>
</feature>
<feature type="binding site" evidence="3 4">
    <location>
        <begin position="160"/>
        <end position="162"/>
    </location>
    <ligand>
        <name>ATP</name>
        <dbReference type="ChEBI" id="CHEBI:30616"/>
    </ligand>
</feature>
<feature type="binding site" evidence="3 4">
    <location>
        <begin position="214"/>
        <end position="218"/>
    </location>
    <ligand>
        <name>ATP</name>
        <dbReference type="ChEBI" id="CHEBI:30616"/>
    </ligand>
</feature>
<feature type="binding site" evidence="3 4">
    <location>
        <begin position="305"/>
        <end position="310"/>
    </location>
    <ligand>
        <name>ATP</name>
        <dbReference type="ChEBI" id="CHEBI:30616"/>
    </ligand>
</feature>
<feature type="modified residue" description="N-acetylmethionine" evidence="1">
    <location>
        <position position="1"/>
    </location>
</feature>
<feature type="modified residue" description="N6-acetyllysine" evidence="1">
    <location>
        <position position="299"/>
    </location>
</feature>
<feature type="modified residue" description="N6-acetyllysine" evidence="1">
    <location>
        <position position="322"/>
    </location>
</feature>
<feature type="strand" evidence="7">
    <location>
        <begin position="10"/>
        <end position="13"/>
    </location>
</feature>
<feature type="strand" evidence="7">
    <location>
        <begin position="15"/>
        <end position="21"/>
    </location>
</feature>
<feature type="strand" evidence="7">
    <location>
        <begin position="29"/>
        <end position="33"/>
    </location>
</feature>
<feature type="strand" evidence="12">
    <location>
        <begin position="36"/>
        <end position="40"/>
    </location>
</feature>
<feature type="strand" evidence="13">
    <location>
        <begin position="56"/>
        <end position="58"/>
    </location>
</feature>
<feature type="helix" evidence="12">
    <location>
        <begin position="59"/>
        <end position="63"/>
    </location>
</feature>
<feature type="helix" evidence="12">
    <location>
        <begin position="65"/>
        <end position="67"/>
    </location>
</feature>
<feature type="strand" evidence="12">
    <location>
        <begin position="68"/>
        <end position="71"/>
    </location>
</feature>
<feature type="strand" evidence="12">
    <location>
        <begin position="73"/>
        <end position="75"/>
    </location>
</feature>
<feature type="strand" evidence="14">
    <location>
        <begin position="78"/>
        <end position="80"/>
    </location>
</feature>
<feature type="helix" evidence="7">
    <location>
        <begin position="84"/>
        <end position="93"/>
    </location>
</feature>
<feature type="turn" evidence="14">
    <location>
        <begin position="95"/>
        <end position="98"/>
    </location>
</feature>
<feature type="helix" evidence="12">
    <location>
        <begin position="102"/>
        <end position="104"/>
    </location>
</feature>
<feature type="strand" evidence="7">
    <location>
        <begin position="109"/>
        <end position="111"/>
    </location>
</feature>
<feature type="turn" evidence="8">
    <location>
        <begin position="117"/>
        <end position="119"/>
    </location>
</feature>
<feature type="strand" evidence="14">
    <location>
        <begin position="134"/>
        <end position="140"/>
    </location>
</feature>
<feature type="helix" evidence="7">
    <location>
        <begin position="141"/>
        <end position="147"/>
    </location>
</feature>
<feature type="turn" evidence="7">
    <location>
        <begin position="148"/>
        <end position="150"/>
    </location>
</feature>
<feature type="strand" evidence="6">
    <location>
        <begin position="156"/>
        <end position="159"/>
    </location>
</feature>
<feature type="strand" evidence="13">
    <location>
        <begin position="160"/>
        <end position="162"/>
    </location>
</feature>
<feature type="strand" evidence="6">
    <location>
        <begin position="164"/>
        <end position="167"/>
    </location>
</feature>
<feature type="strand" evidence="11">
    <location>
        <begin position="171"/>
        <end position="174"/>
    </location>
</feature>
<feature type="turn" evidence="7">
    <location>
        <begin position="176"/>
        <end position="178"/>
    </location>
</feature>
<feature type="strand" evidence="6">
    <location>
        <begin position="180"/>
        <end position="183"/>
    </location>
</feature>
<feature type="helix" evidence="6">
    <location>
        <begin position="186"/>
        <end position="199"/>
    </location>
</feature>
<feature type="turn" evidence="6">
    <location>
        <begin position="206"/>
        <end position="209"/>
    </location>
</feature>
<feature type="helix" evidence="6">
    <location>
        <begin position="210"/>
        <end position="220"/>
    </location>
</feature>
<feature type="helix" evidence="6">
    <location>
        <begin position="227"/>
        <end position="236"/>
    </location>
</feature>
<feature type="strand" evidence="9">
    <location>
        <begin position="238"/>
        <end position="240"/>
    </location>
</feature>
<feature type="strand" evidence="6">
    <location>
        <begin position="242"/>
        <end position="245"/>
    </location>
</feature>
<feature type="strand" evidence="6">
    <location>
        <begin position="251"/>
        <end position="254"/>
    </location>
</feature>
<feature type="helix" evidence="6">
    <location>
        <begin position="257"/>
        <end position="260"/>
    </location>
</feature>
<feature type="helix" evidence="6">
    <location>
        <begin position="262"/>
        <end position="265"/>
    </location>
</feature>
<feature type="helix" evidence="6">
    <location>
        <begin position="268"/>
        <end position="271"/>
    </location>
</feature>
<feature type="helix" evidence="6">
    <location>
        <begin position="278"/>
        <end position="288"/>
    </location>
</feature>
<feature type="turn" evidence="6">
    <location>
        <begin position="291"/>
        <end position="293"/>
    </location>
</feature>
<feature type="helix" evidence="6">
    <location>
        <begin position="294"/>
        <end position="298"/>
    </location>
</feature>
<feature type="strand" evidence="6">
    <location>
        <begin position="302"/>
        <end position="305"/>
    </location>
</feature>
<feature type="helix" evidence="6">
    <location>
        <begin position="306"/>
        <end position="308"/>
    </location>
</feature>
<feature type="helix" evidence="6">
    <location>
        <begin position="313"/>
        <end position="328"/>
    </location>
</feature>
<feature type="turn" evidence="10">
    <location>
        <begin position="329"/>
        <end position="332"/>
    </location>
</feature>
<feature type="helix" evidence="7">
    <location>
        <begin position="336"/>
        <end position="339"/>
    </location>
</feature>
<feature type="helix" evidence="7">
    <location>
        <begin position="350"/>
        <end position="352"/>
    </location>
</feature>
<feature type="helix" evidence="7">
    <location>
        <begin position="353"/>
        <end position="361"/>
    </location>
</feature>
<feature type="turn" evidence="12">
    <location>
        <begin position="365"/>
        <end position="367"/>
    </location>
</feature>
<feature type="strand" evidence="14">
    <location>
        <begin position="370"/>
        <end position="373"/>
    </location>
</feature>
<feature type="helix" evidence="14">
    <location>
        <begin position="375"/>
        <end position="379"/>
    </location>
</feature>
<feature type="helix" evidence="14">
    <location>
        <begin position="384"/>
        <end position="387"/>
    </location>
</feature>
<reference key="1">
    <citation type="submission" date="2007-07" db="EMBL/GenBank/DDBJ databases">
        <authorList>
            <consortium name="NIH - Mammalian Gene Collection (MGC) project"/>
        </authorList>
    </citation>
    <scope>NUCLEOTIDE SEQUENCE [LARGE SCALE MRNA]</scope>
    <source>
        <strain>Hereford</strain>
        <tissue>Fetal skin</tissue>
    </source>
</reference>
<reference key="2">
    <citation type="journal article" date="2001" name="Science">
        <title>Crystal structure of Arp2/3 complex.</title>
        <authorList>
            <person name="Robinson R.C."/>
            <person name="Turbedsky K."/>
            <person name="Kaiser D.A."/>
            <person name="Marchand J.-B."/>
            <person name="Higgs H.N."/>
            <person name="Choe S."/>
            <person name="Pollard T.D."/>
        </authorList>
    </citation>
    <scope>X-RAY CRYSTALLOGRAPHY (2.0 ANGSTROMS) OF ARP2/3 COMPLEX</scope>
</reference>
<reference key="3">
    <citation type="journal article" date="2004" name="Proc. Natl. Acad. Sci. U.S.A.">
        <title>Crystal structures of actin-related protein 2/3 complex with bound ATP or ADP.</title>
        <authorList>
            <person name="Nolen B.J."/>
            <person name="Littlefield R.S."/>
            <person name="Pollard T.D."/>
        </authorList>
    </citation>
    <scope>X-RAY CRYSTALLOGRAPHY (2.55 ANGSTROMS) OF ARP2/3 COMPLEX WITH BOUND ATP</scope>
</reference>
<reference key="4">
    <citation type="journal article" date="2007" name="Mol. Cell">
        <title>Insights into the influence of nucleotides on actin family proteins from seven structures of Arp2/3 complex.</title>
        <authorList>
            <person name="Nolen B.J."/>
            <person name="Pollard T.D."/>
        </authorList>
    </citation>
    <scope>X-RAY CRYSTALLOGRAPHY (2.46 ANGSTROMS) OF ARP2/3 COMPLEX WITH BOUND ATP</scope>
</reference>
<proteinExistence type="evidence at protein level"/>
<name>ARP2_BOVIN</name>
<organism>
    <name type="scientific">Bos taurus</name>
    <name type="common">Bovine</name>
    <dbReference type="NCBI Taxonomy" id="9913"/>
    <lineage>
        <taxon>Eukaryota</taxon>
        <taxon>Metazoa</taxon>
        <taxon>Chordata</taxon>
        <taxon>Craniata</taxon>
        <taxon>Vertebrata</taxon>
        <taxon>Euteleostomi</taxon>
        <taxon>Mammalia</taxon>
        <taxon>Eutheria</taxon>
        <taxon>Laurasiatheria</taxon>
        <taxon>Artiodactyla</taxon>
        <taxon>Ruminantia</taxon>
        <taxon>Pecora</taxon>
        <taxon>Bovidae</taxon>
        <taxon>Bovinae</taxon>
        <taxon>Bos</taxon>
    </lineage>
</organism>
<keyword id="KW-0002">3D-structure</keyword>
<keyword id="KW-0007">Acetylation</keyword>
<keyword id="KW-0009">Actin-binding</keyword>
<keyword id="KW-0067">ATP-binding</keyword>
<keyword id="KW-0966">Cell projection</keyword>
<keyword id="KW-0963">Cytoplasm</keyword>
<keyword id="KW-0206">Cytoskeleton</keyword>
<keyword id="KW-0547">Nucleotide-binding</keyword>
<keyword id="KW-0539">Nucleus</keyword>
<keyword id="KW-1185">Reference proteome</keyword>
<comment type="function">
    <text evidence="1">ATP-binding component of the Arp2/3 complex, a multiprotein complex that mediates actin polymerization upon stimulation by nucleation-promoting factor (NPF). The Arp2/3 complex mediates the formation of branched actin networks in the cytoplasm, providing the force for cell motility. Seems to contact the pointed end of the daughter actin filament. In podocytes, required for the formation of lamellipodia downstream of AVIL and PLCE1 regulation. In addition to its role in the cytoplasmic cytoskeleton, the Arp2/3 complex also promotes actin polymerization in the nucleus, thereby regulating gene transcription and repair of damaged DNA. The Arp2/3 complex promotes homologous recombination (HR) repair in response to DNA damage by promoting nuclear actin polymerization, leading to drive motility of double-strand breaks (DSBs).</text>
</comment>
<comment type="subunit">
    <text evidence="1 2 3 4">Component of the Arp2/3 complex composed of ACTR2/ARP2, ACTR3/ARP3, ARPC1B/p41-ARC, ARPC2/p34-ARC, ARPC3/p21-ARC, ARPC4/p20-ARC and ARPC5/p16-ARC (PubMed:11721045, PubMed:15505213, PubMed:17499050). Interacts with AVIL (By similarity).</text>
</comment>
<comment type="interaction">
    <interactant intactId="EBI-6162748">
        <id>A7MB62</id>
    </interactant>
    <interactant intactId="EBI-6162776">
        <id>Q95107</id>
        <label>WASL</label>
    </interactant>
    <organismsDiffer>false</organismsDiffer>
    <experiments>2</experiments>
</comment>
<comment type="subcellular location">
    <subcellularLocation>
        <location evidence="1">Cytoplasm</location>
        <location evidence="1">Cytoskeleton</location>
    </subcellularLocation>
    <subcellularLocation>
        <location evidence="1">Cell projection</location>
    </subcellularLocation>
    <subcellularLocation>
        <location evidence="1">Nucleus</location>
    </subcellularLocation>
</comment>
<comment type="similarity">
    <text evidence="5">Belongs to the actin family. ARP2 subfamily.</text>
</comment>